<feature type="chain" id="PRO_1000046562" description="Oxygen-dependent choline dehydrogenase">
    <location>
        <begin position="1"/>
        <end position="558"/>
    </location>
</feature>
<feature type="active site" description="Proton acceptor" evidence="1">
    <location>
        <position position="473"/>
    </location>
</feature>
<feature type="binding site" evidence="1">
    <location>
        <begin position="4"/>
        <end position="33"/>
    </location>
    <ligand>
        <name>FAD</name>
        <dbReference type="ChEBI" id="CHEBI:57692"/>
    </ligand>
</feature>
<dbReference type="EC" id="1.1.99.1" evidence="1"/>
<dbReference type="EC" id="1.2.1.8" evidence="1"/>
<dbReference type="EMBL" id="CP000822">
    <property type="protein sequence ID" value="ABV13693.1"/>
    <property type="molecule type" value="Genomic_DNA"/>
</dbReference>
<dbReference type="RefSeq" id="WP_012133412.1">
    <property type="nucleotide sequence ID" value="NC_009792.1"/>
</dbReference>
<dbReference type="SMR" id="A8AJN0"/>
<dbReference type="STRING" id="290338.CKO_02584"/>
<dbReference type="CAZy" id="AA3">
    <property type="family name" value="Auxiliary Activities 3"/>
</dbReference>
<dbReference type="GeneID" id="45136454"/>
<dbReference type="KEGG" id="cko:CKO_02584"/>
<dbReference type="HOGENOM" id="CLU_002865_7_1_6"/>
<dbReference type="OrthoDB" id="9785276at2"/>
<dbReference type="UniPathway" id="UPA00529">
    <property type="reaction ID" value="UER00385"/>
</dbReference>
<dbReference type="Proteomes" id="UP000008148">
    <property type="component" value="Chromosome"/>
</dbReference>
<dbReference type="GO" id="GO:0016020">
    <property type="term" value="C:membrane"/>
    <property type="evidence" value="ECO:0007669"/>
    <property type="project" value="TreeGrafter"/>
</dbReference>
<dbReference type="GO" id="GO:0008802">
    <property type="term" value="F:betaine-aldehyde dehydrogenase (NAD+) activity"/>
    <property type="evidence" value="ECO:0007669"/>
    <property type="project" value="UniProtKB-EC"/>
</dbReference>
<dbReference type="GO" id="GO:0008812">
    <property type="term" value="F:choline dehydrogenase activity"/>
    <property type="evidence" value="ECO:0007669"/>
    <property type="project" value="UniProtKB-UniRule"/>
</dbReference>
<dbReference type="GO" id="GO:0050660">
    <property type="term" value="F:flavin adenine dinucleotide binding"/>
    <property type="evidence" value="ECO:0007669"/>
    <property type="project" value="InterPro"/>
</dbReference>
<dbReference type="GO" id="GO:0019285">
    <property type="term" value="P:glycine betaine biosynthetic process from choline"/>
    <property type="evidence" value="ECO:0007669"/>
    <property type="project" value="UniProtKB-UniRule"/>
</dbReference>
<dbReference type="Gene3D" id="3.50.50.60">
    <property type="entry name" value="FAD/NAD(P)-binding domain"/>
    <property type="match status" value="1"/>
</dbReference>
<dbReference type="Gene3D" id="3.30.560.10">
    <property type="entry name" value="Glucose Oxidase, domain 3"/>
    <property type="match status" value="1"/>
</dbReference>
<dbReference type="HAMAP" id="MF_00750">
    <property type="entry name" value="Choline_dehydrogen"/>
    <property type="match status" value="1"/>
</dbReference>
<dbReference type="InterPro" id="IPR011533">
    <property type="entry name" value="BetA"/>
</dbReference>
<dbReference type="InterPro" id="IPR036188">
    <property type="entry name" value="FAD/NAD-bd_sf"/>
</dbReference>
<dbReference type="InterPro" id="IPR012132">
    <property type="entry name" value="GMC_OxRdtase"/>
</dbReference>
<dbReference type="InterPro" id="IPR000172">
    <property type="entry name" value="GMC_OxRdtase_N"/>
</dbReference>
<dbReference type="InterPro" id="IPR007867">
    <property type="entry name" value="GMC_OxRtase_C"/>
</dbReference>
<dbReference type="NCBIfam" id="TIGR01810">
    <property type="entry name" value="betA"/>
    <property type="match status" value="1"/>
</dbReference>
<dbReference type="NCBIfam" id="NF002550">
    <property type="entry name" value="PRK02106.1"/>
    <property type="match status" value="1"/>
</dbReference>
<dbReference type="PANTHER" id="PTHR11552:SF147">
    <property type="entry name" value="CHOLINE DEHYDROGENASE, MITOCHONDRIAL"/>
    <property type="match status" value="1"/>
</dbReference>
<dbReference type="PANTHER" id="PTHR11552">
    <property type="entry name" value="GLUCOSE-METHANOL-CHOLINE GMC OXIDOREDUCTASE"/>
    <property type="match status" value="1"/>
</dbReference>
<dbReference type="Pfam" id="PF05199">
    <property type="entry name" value="GMC_oxred_C"/>
    <property type="match status" value="1"/>
</dbReference>
<dbReference type="Pfam" id="PF00732">
    <property type="entry name" value="GMC_oxred_N"/>
    <property type="match status" value="1"/>
</dbReference>
<dbReference type="PIRSF" id="PIRSF000137">
    <property type="entry name" value="Alcohol_oxidase"/>
    <property type="match status" value="1"/>
</dbReference>
<dbReference type="SUPFAM" id="SSF54373">
    <property type="entry name" value="FAD-linked reductases, C-terminal domain"/>
    <property type="match status" value="1"/>
</dbReference>
<dbReference type="SUPFAM" id="SSF51905">
    <property type="entry name" value="FAD/NAD(P)-binding domain"/>
    <property type="match status" value="1"/>
</dbReference>
<dbReference type="PROSITE" id="PS00623">
    <property type="entry name" value="GMC_OXRED_1"/>
    <property type="match status" value="1"/>
</dbReference>
<dbReference type="PROSITE" id="PS00624">
    <property type="entry name" value="GMC_OXRED_2"/>
    <property type="match status" value="1"/>
</dbReference>
<comment type="function">
    <text evidence="1">Involved in the biosynthesis of the osmoprotectant glycine betaine. Catalyzes the oxidation of choline to betaine aldehyde and betaine aldehyde to glycine betaine at the same rate.</text>
</comment>
<comment type="catalytic activity">
    <reaction evidence="1">
        <text>choline + A = betaine aldehyde + AH2</text>
        <dbReference type="Rhea" id="RHEA:17433"/>
        <dbReference type="ChEBI" id="CHEBI:13193"/>
        <dbReference type="ChEBI" id="CHEBI:15354"/>
        <dbReference type="ChEBI" id="CHEBI:15710"/>
        <dbReference type="ChEBI" id="CHEBI:17499"/>
        <dbReference type="EC" id="1.1.99.1"/>
    </reaction>
</comment>
<comment type="catalytic activity">
    <reaction evidence="1">
        <text>betaine aldehyde + NAD(+) + H2O = glycine betaine + NADH + 2 H(+)</text>
        <dbReference type="Rhea" id="RHEA:15305"/>
        <dbReference type="ChEBI" id="CHEBI:15377"/>
        <dbReference type="ChEBI" id="CHEBI:15378"/>
        <dbReference type="ChEBI" id="CHEBI:15710"/>
        <dbReference type="ChEBI" id="CHEBI:17750"/>
        <dbReference type="ChEBI" id="CHEBI:57540"/>
        <dbReference type="ChEBI" id="CHEBI:57945"/>
        <dbReference type="EC" id="1.2.1.8"/>
    </reaction>
</comment>
<comment type="cofactor">
    <cofactor evidence="1">
        <name>FAD</name>
        <dbReference type="ChEBI" id="CHEBI:57692"/>
    </cofactor>
</comment>
<comment type="pathway">
    <text evidence="1">Amine and polyamine biosynthesis; betaine biosynthesis via choline pathway; betaine aldehyde from choline (cytochrome c reductase route): step 1/1.</text>
</comment>
<comment type="similarity">
    <text evidence="1">Belongs to the GMC oxidoreductase family.</text>
</comment>
<sequence length="558" mass="61772">MHFDYIIIGAGSAGNVLATRLTEDSDTTVLLLEAGGPDYRADFRTQMPAALAFPLQGKRYNWAYETEPEPHMNYRRMECGRGKGLGGSSLINGMCYIRGNAMDLDNWAQEPGLEHWSYLNCLPYYRKAETRDIGPNDYHGGDGPVSVATPKHNNNPLFHAMIEAGVQAGYPRTDDLNGYQQEGFGPMDRTVTPQGRRASTARGYLDQAKGRPNLTIITHALTDHILFEGKKASGVEWLEGDSTIPTRAMARKEVLLCAGAIASPQILQRSGVGDASLLKAFDIPLVHHLPGVGENLQDHLEMYLQYECKEPVSLYPALQWWNQPKIGAEWLFGGTGVGASNHFEAGGFIRSSEAFSWPNIQYHFLPVAINYNGSNAVKEHGFQCHVGSMRSPSRGHVHIKSRDPREHPAILFNYMSTGQDWQEFRDAIRITREIINQPALDKYRGREISPGITCQTDEQLDAFVRDHAETAFHPCGTCKMGYDEMAVVDGEGRVHGVENLRVVDASIMPQIITGNLNATTIMIGEKMADAIRGREPLAKSTASYYVAGDAPVRQPPLR</sequence>
<evidence type="ECO:0000255" key="1">
    <source>
        <dbReference type="HAMAP-Rule" id="MF_00750"/>
    </source>
</evidence>
<protein>
    <recommendedName>
        <fullName evidence="1">Oxygen-dependent choline dehydrogenase</fullName>
        <shortName evidence="1">CDH</shortName>
        <shortName evidence="1">CHD</shortName>
        <ecNumber evidence="1">1.1.99.1</ecNumber>
    </recommendedName>
    <alternativeName>
        <fullName evidence="1">Betaine aldehyde dehydrogenase</fullName>
        <shortName evidence="1">BADH</shortName>
        <ecNumber evidence="1">1.2.1.8</ecNumber>
    </alternativeName>
</protein>
<name>BETA_CITK8</name>
<accession>A8AJN0</accession>
<proteinExistence type="inferred from homology"/>
<gene>
    <name evidence="1" type="primary">betA</name>
    <name type="ordered locus">CKO_02584</name>
</gene>
<organism>
    <name type="scientific">Citrobacter koseri (strain ATCC BAA-895 / CDC 4225-83 / SGSC4696)</name>
    <dbReference type="NCBI Taxonomy" id="290338"/>
    <lineage>
        <taxon>Bacteria</taxon>
        <taxon>Pseudomonadati</taxon>
        <taxon>Pseudomonadota</taxon>
        <taxon>Gammaproteobacteria</taxon>
        <taxon>Enterobacterales</taxon>
        <taxon>Enterobacteriaceae</taxon>
        <taxon>Citrobacter</taxon>
    </lineage>
</organism>
<reference key="1">
    <citation type="submission" date="2007-08" db="EMBL/GenBank/DDBJ databases">
        <authorList>
            <consortium name="The Citrobacter koseri Genome Sequencing Project"/>
            <person name="McClelland M."/>
            <person name="Sanderson E.K."/>
            <person name="Porwollik S."/>
            <person name="Spieth J."/>
            <person name="Clifton W.S."/>
            <person name="Latreille P."/>
            <person name="Courtney L."/>
            <person name="Wang C."/>
            <person name="Pepin K."/>
            <person name="Bhonagiri V."/>
            <person name="Nash W."/>
            <person name="Johnson M."/>
            <person name="Thiruvilangam P."/>
            <person name="Wilson R."/>
        </authorList>
    </citation>
    <scope>NUCLEOTIDE SEQUENCE [LARGE SCALE GENOMIC DNA]</scope>
    <source>
        <strain>ATCC BAA-895 / CDC 4225-83 / SGSC4696</strain>
    </source>
</reference>
<keyword id="KW-0274">FAD</keyword>
<keyword id="KW-0285">Flavoprotein</keyword>
<keyword id="KW-0520">NAD</keyword>
<keyword id="KW-0560">Oxidoreductase</keyword>
<keyword id="KW-1185">Reference proteome</keyword>